<evidence type="ECO:0000255" key="1">
    <source>
        <dbReference type="HAMAP-Rule" id="MF_01104"/>
    </source>
</evidence>
<accession>B7LXK9</accession>
<feature type="chain" id="PRO_1000137027" description="Protein Syd">
    <location>
        <begin position="1"/>
        <end position="181"/>
    </location>
</feature>
<gene>
    <name evidence="1" type="primary">syd</name>
    <name type="ordered locus">ECIAI1_2902</name>
</gene>
<name>SYDP_ECO8A</name>
<dbReference type="EMBL" id="CU928160">
    <property type="protein sequence ID" value="CAQ99721.1"/>
    <property type="molecule type" value="Genomic_DNA"/>
</dbReference>
<dbReference type="RefSeq" id="WP_000342431.1">
    <property type="nucleotide sequence ID" value="NC_011741.1"/>
</dbReference>
<dbReference type="SMR" id="B7LXK9"/>
<dbReference type="GeneID" id="93779205"/>
<dbReference type="KEGG" id="ecr:ECIAI1_2902"/>
<dbReference type="HOGENOM" id="CLU_121866_0_0_6"/>
<dbReference type="GO" id="GO:0009898">
    <property type="term" value="C:cytoplasmic side of plasma membrane"/>
    <property type="evidence" value="ECO:0007669"/>
    <property type="project" value="InterPro"/>
</dbReference>
<dbReference type="CDD" id="cd16323">
    <property type="entry name" value="Syd"/>
    <property type="match status" value="1"/>
</dbReference>
<dbReference type="FunFam" id="3.40.1580.20:FF:000001">
    <property type="entry name" value="Protein Syd"/>
    <property type="match status" value="1"/>
</dbReference>
<dbReference type="Gene3D" id="3.40.1580.20">
    <property type="entry name" value="Syd protein"/>
    <property type="match status" value="1"/>
</dbReference>
<dbReference type="HAMAP" id="MF_01104">
    <property type="entry name" value="Syd"/>
    <property type="match status" value="1"/>
</dbReference>
<dbReference type="InterPro" id="IPR009948">
    <property type="entry name" value="Syd"/>
</dbReference>
<dbReference type="InterPro" id="IPR038228">
    <property type="entry name" value="Syd_sf"/>
</dbReference>
<dbReference type="NCBIfam" id="NF003439">
    <property type="entry name" value="PRK04968.1"/>
    <property type="match status" value="1"/>
</dbReference>
<dbReference type="Pfam" id="PF07348">
    <property type="entry name" value="Syd"/>
    <property type="match status" value="1"/>
</dbReference>
<comment type="function">
    <text evidence="1">Interacts with the SecY protein in vivo. May bind preferentially to an uncomplexed state of SecY, thus functioning either as a chelating agent for excess SecY in the cell or as a regulatory factor that negatively controls the translocase function.</text>
</comment>
<comment type="subcellular location">
    <subcellularLocation>
        <location evidence="1">Cell inner membrane</location>
        <topology evidence="1">Peripheral membrane protein</topology>
        <orientation evidence="1">Cytoplasmic side</orientation>
    </subcellularLocation>
    <text evidence="1">Loosely associated with the cytoplasmic side of the inner membrane, probably via SecY.</text>
</comment>
<comment type="similarity">
    <text evidence="1">Belongs to the Syd family.</text>
</comment>
<protein>
    <recommendedName>
        <fullName evidence="1">Protein Syd</fullName>
    </recommendedName>
</protein>
<organism>
    <name type="scientific">Escherichia coli O8 (strain IAI1)</name>
    <dbReference type="NCBI Taxonomy" id="585034"/>
    <lineage>
        <taxon>Bacteria</taxon>
        <taxon>Pseudomonadati</taxon>
        <taxon>Pseudomonadota</taxon>
        <taxon>Gammaproteobacteria</taxon>
        <taxon>Enterobacterales</taxon>
        <taxon>Enterobacteriaceae</taxon>
        <taxon>Escherichia</taxon>
    </lineage>
</organism>
<proteinExistence type="inferred from homology"/>
<keyword id="KW-0997">Cell inner membrane</keyword>
<keyword id="KW-1003">Cell membrane</keyword>
<keyword id="KW-0472">Membrane</keyword>
<sequence length="181" mass="20708">MDDLTAQALKDFTARYCDAWHEEHKSWPLSEELYGVPSPCIISTTEDAVYWQPQPFTGEQNVNAVERAFDIVIQPTIHTFYTTQFAGDMHAQFGDIKLTLLQTWSEDDFRRVQENLIGHLVTQKRLKLPPTLFIATLEEELEVISVCNLSGEVCKETLGTRKRTHLASNLAEFLNQLKPLL</sequence>
<reference key="1">
    <citation type="journal article" date="2009" name="PLoS Genet.">
        <title>Organised genome dynamics in the Escherichia coli species results in highly diverse adaptive paths.</title>
        <authorList>
            <person name="Touchon M."/>
            <person name="Hoede C."/>
            <person name="Tenaillon O."/>
            <person name="Barbe V."/>
            <person name="Baeriswyl S."/>
            <person name="Bidet P."/>
            <person name="Bingen E."/>
            <person name="Bonacorsi S."/>
            <person name="Bouchier C."/>
            <person name="Bouvet O."/>
            <person name="Calteau A."/>
            <person name="Chiapello H."/>
            <person name="Clermont O."/>
            <person name="Cruveiller S."/>
            <person name="Danchin A."/>
            <person name="Diard M."/>
            <person name="Dossat C."/>
            <person name="Karoui M.E."/>
            <person name="Frapy E."/>
            <person name="Garry L."/>
            <person name="Ghigo J.M."/>
            <person name="Gilles A.M."/>
            <person name="Johnson J."/>
            <person name="Le Bouguenec C."/>
            <person name="Lescat M."/>
            <person name="Mangenot S."/>
            <person name="Martinez-Jehanne V."/>
            <person name="Matic I."/>
            <person name="Nassif X."/>
            <person name="Oztas S."/>
            <person name="Petit M.A."/>
            <person name="Pichon C."/>
            <person name="Rouy Z."/>
            <person name="Ruf C.S."/>
            <person name="Schneider D."/>
            <person name="Tourret J."/>
            <person name="Vacherie B."/>
            <person name="Vallenet D."/>
            <person name="Medigue C."/>
            <person name="Rocha E.P.C."/>
            <person name="Denamur E."/>
        </authorList>
    </citation>
    <scope>NUCLEOTIDE SEQUENCE [LARGE SCALE GENOMIC DNA]</scope>
    <source>
        <strain>IAI1</strain>
    </source>
</reference>